<proteinExistence type="inferred from homology"/>
<gene>
    <name evidence="1" type="primary">mnmG</name>
    <name evidence="1" type="synonym">gidA</name>
    <name type="ordered locus">RT0076</name>
</gene>
<evidence type="ECO:0000255" key="1">
    <source>
        <dbReference type="HAMAP-Rule" id="MF_00129"/>
    </source>
</evidence>
<dbReference type="EMBL" id="AE017197">
    <property type="protein sequence ID" value="AAU03562.1"/>
    <property type="molecule type" value="Genomic_DNA"/>
</dbReference>
<dbReference type="RefSeq" id="WP_011190549.1">
    <property type="nucleotide sequence ID" value="NC_006142.1"/>
</dbReference>
<dbReference type="SMR" id="Q68XT0"/>
<dbReference type="KEGG" id="rty:RT0076"/>
<dbReference type="eggNOG" id="COG0445">
    <property type="taxonomic scope" value="Bacteria"/>
</dbReference>
<dbReference type="HOGENOM" id="CLU_007831_2_2_5"/>
<dbReference type="OrthoDB" id="9815560at2"/>
<dbReference type="Proteomes" id="UP000000604">
    <property type="component" value="Chromosome"/>
</dbReference>
<dbReference type="GO" id="GO:0005737">
    <property type="term" value="C:cytoplasm"/>
    <property type="evidence" value="ECO:0007669"/>
    <property type="project" value="UniProtKB-SubCell"/>
</dbReference>
<dbReference type="GO" id="GO:0050660">
    <property type="term" value="F:flavin adenine dinucleotide binding"/>
    <property type="evidence" value="ECO:0007669"/>
    <property type="project" value="UniProtKB-UniRule"/>
</dbReference>
<dbReference type="GO" id="GO:0030488">
    <property type="term" value="P:tRNA methylation"/>
    <property type="evidence" value="ECO:0007669"/>
    <property type="project" value="TreeGrafter"/>
</dbReference>
<dbReference type="GO" id="GO:0002098">
    <property type="term" value="P:tRNA wobble uridine modification"/>
    <property type="evidence" value="ECO:0007669"/>
    <property type="project" value="InterPro"/>
</dbReference>
<dbReference type="FunFam" id="3.50.50.60:FF:000082">
    <property type="entry name" value="protein MTO1 homolog, mitochondrial isoform X1"/>
    <property type="match status" value="1"/>
</dbReference>
<dbReference type="FunFam" id="1.10.150.570:FF:000001">
    <property type="entry name" value="tRNA uridine 5-carboxymethylaminomethyl modification enzyme MnmG"/>
    <property type="match status" value="1"/>
</dbReference>
<dbReference type="FunFam" id="3.50.50.60:FF:000002">
    <property type="entry name" value="tRNA uridine 5-carboxymethylaminomethyl modification enzyme MnmG"/>
    <property type="match status" value="1"/>
</dbReference>
<dbReference type="Gene3D" id="3.50.50.60">
    <property type="entry name" value="FAD/NAD(P)-binding domain"/>
    <property type="match status" value="2"/>
</dbReference>
<dbReference type="Gene3D" id="1.10.150.570">
    <property type="entry name" value="GidA associated domain, C-terminal subdomain"/>
    <property type="match status" value="1"/>
</dbReference>
<dbReference type="HAMAP" id="MF_00129">
    <property type="entry name" value="MnmG_GidA"/>
    <property type="match status" value="1"/>
</dbReference>
<dbReference type="InterPro" id="IPR036188">
    <property type="entry name" value="FAD/NAD-bd_sf"/>
</dbReference>
<dbReference type="InterPro" id="IPR049312">
    <property type="entry name" value="GIDA_C_N"/>
</dbReference>
<dbReference type="InterPro" id="IPR004416">
    <property type="entry name" value="MnmG"/>
</dbReference>
<dbReference type="InterPro" id="IPR002218">
    <property type="entry name" value="MnmG-rel"/>
</dbReference>
<dbReference type="InterPro" id="IPR020595">
    <property type="entry name" value="MnmG-rel_CS"/>
</dbReference>
<dbReference type="InterPro" id="IPR026904">
    <property type="entry name" value="MnmG_C"/>
</dbReference>
<dbReference type="InterPro" id="IPR047001">
    <property type="entry name" value="MnmG_C_subdom"/>
</dbReference>
<dbReference type="InterPro" id="IPR044920">
    <property type="entry name" value="MnmG_C_subdom_sf"/>
</dbReference>
<dbReference type="InterPro" id="IPR040131">
    <property type="entry name" value="MnmG_N"/>
</dbReference>
<dbReference type="NCBIfam" id="TIGR00136">
    <property type="entry name" value="mnmG_gidA"/>
    <property type="match status" value="1"/>
</dbReference>
<dbReference type="PANTHER" id="PTHR11806">
    <property type="entry name" value="GLUCOSE INHIBITED DIVISION PROTEIN A"/>
    <property type="match status" value="1"/>
</dbReference>
<dbReference type="PANTHER" id="PTHR11806:SF0">
    <property type="entry name" value="PROTEIN MTO1 HOMOLOG, MITOCHONDRIAL"/>
    <property type="match status" value="1"/>
</dbReference>
<dbReference type="Pfam" id="PF01134">
    <property type="entry name" value="GIDA"/>
    <property type="match status" value="1"/>
</dbReference>
<dbReference type="Pfam" id="PF21680">
    <property type="entry name" value="GIDA_C_1st"/>
    <property type="match status" value="1"/>
</dbReference>
<dbReference type="Pfam" id="PF13932">
    <property type="entry name" value="SAM_GIDA_C"/>
    <property type="match status" value="1"/>
</dbReference>
<dbReference type="SMART" id="SM01228">
    <property type="entry name" value="GIDA_assoc_3"/>
    <property type="match status" value="1"/>
</dbReference>
<dbReference type="SUPFAM" id="SSF51905">
    <property type="entry name" value="FAD/NAD(P)-binding domain"/>
    <property type="match status" value="1"/>
</dbReference>
<dbReference type="PROSITE" id="PS01280">
    <property type="entry name" value="GIDA_1"/>
    <property type="match status" value="1"/>
</dbReference>
<dbReference type="PROSITE" id="PS01281">
    <property type="entry name" value="GIDA_2"/>
    <property type="match status" value="1"/>
</dbReference>
<name>MNMG_RICTY</name>
<feature type="chain" id="PRO_0000117167" description="tRNA uridine 5-carboxymethylaminomethyl modification enzyme MnmG">
    <location>
        <begin position="1"/>
        <end position="621"/>
    </location>
</feature>
<feature type="binding site" evidence="1">
    <location>
        <begin position="10"/>
        <end position="15"/>
    </location>
    <ligand>
        <name>FAD</name>
        <dbReference type="ChEBI" id="CHEBI:57692"/>
    </ligand>
</feature>
<feature type="binding site" evidence="1">
    <location>
        <position position="122"/>
    </location>
    <ligand>
        <name>FAD</name>
        <dbReference type="ChEBI" id="CHEBI:57692"/>
    </ligand>
</feature>
<feature type="binding site" evidence="1">
    <location>
        <position position="177"/>
    </location>
    <ligand>
        <name>FAD</name>
        <dbReference type="ChEBI" id="CHEBI:57692"/>
    </ligand>
</feature>
<feature type="binding site" evidence="1">
    <location>
        <begin position="269"/>
        <end position="283"/>
    </location>
    <ligand>
        <name>NAD(+)</name>
        <dbReference type="ChEBI" id="CHEBI:57540"/>
    </ligand>
</feature>
<feature type="binding site" evidence="1">
    <location>
        <position position="366"/>
    </location>
    <ligand>
        <name>FAD</name>
        <dbReference type="ChEBI" id="CHEBI:57692"/>
    </ligand>
</feature>
<accession>Q68XT0</accession>
<comment type="function">
    <text evidence="1">NAD-binding protein involved in the addition of a carboxymethylaminomethyl (cmnm) group at the wobble position (U34) of certain tRNAs, forming tRNA-cmnm(5)s(2)U34.</text>
</comment>
<comment type="cofactor">
    <cofactor evidence="1">
        <name>FAD</name>
        <dbReference type="ChEBI" id="CHEBI:57692"/>
    </cofactor>
</comment>
<comment type="subunit">
    <text evidence="1">Homodimer. Heterotetramer of two MnmE and two MnmG subunits.</text>
</comment>
<comment type="subcellular location">
    <subcellularLocation>
        <location evidence="1">Cytoplasm</location>
    </subcellularLocation>
</comment>
<comment type="similarity">
    <text evidence="1">Belongs to the MnmG family.</text>
</comment>
<reference key="1">
    <citation type="journal article" date="2004" name="J. Bacteriol.">
        <title>Complete genome sequence of Rickettsia typhi and comparison with sequences of other Rickettsiae.</title>
        <authorList>
            <person name="McLeod M.P."/>
            <person name="Qin X."/>
            <person name="Karpathy S.E."/>
            <person name="Gioia J."/>
            <person name="Highlander S.K."/>
            <person name="Fox G.E."/>
            <person name="McNeill T.Z."/>
            <person name="Jiang H."/>
            <person name="Muzny D."/>
            <person name="Jacob L.S."/>
            <person name="Hawes A.C."/>
            <person name="Sodergren E."/>
            <person name="Gill R."/>
            <person name="Hume J."/>
            <person name="Morgan M."/>
            <person name="Fan G."/>
            <person name="Amin A.G."/>
            <person name="Gibbs R.A."/>
            <person name="Hong C."/>
            <person name="Yu X.-J."/>
            <person name="Walker D.H."/>
            <person name="Weinstock G.M."/>
        </authorList>
    </citation>
    <scope>NUCLEOTIDE SEQUENCE [LARGE SCALE GENOMIC DNA]</scope>
    <source>
        <strain>ATCC VR-144 / Wilmington</strain>
    </source>
</reference>
<sequence>MLKYGVIIIGGGHAGVEAAAASARLGVHTLLITLKPENLGEMSCNPAIGGIAKGTLVKEIDALDGLMGFVIDKAGIHYKMLNETRGPAVWGPRAQADRKLYKKVMYQILTNYRNLDILYGKVEDIQIKSSKVEAVILNNGIKIFCQKVVLTTGTFLSGFIHIGSMKIPAGRIYEEPSYGLSNTLKRLGFKIARLKTGTPPRIDGRTIDYSKTTLQQGDQIPRPFSELTDAIDVPQINCFITKTTAETHDIIRENLDKSAMYSGQIKGIGPRYCPSIEDKIVKFSTKLEHRIFLEPEGLEDYTIYPNGISTSLPKEIQYKLIKTIPGLENAQVLRPGYAIEYDYVDPREINITLETKKITGLYFAGQINGTTGYEEAAGQGIIAGINAALSVKDQEPFILTRATSYIGVMIDDLTTSGTVEPYRMFTSRSEYRLSLRADNADLRLTELGINIGVVTEKRKNIFTKKCNNIEKTKLLLNKLSLTTSKLAKIGIQVAQDGKYKTVLDLFKIPTFNVEQAIKIFPILRKQNNNILQLLYIEAKYASYLTRQYADINLFQSEEIQLIPKNIDYFKIPSISLEIQEKLSYHKPTTIGVARRISGITPAAIMAIIIYLKTKYSDGSSK</sequence>
<protein>
    <recommendedName>
        <fullName evidence="1">tRNA uridine 5-carboxymethylaminomethyl modification enzyme MnmG</fullName>
    </recommendedName>
    <alternativeName>
        <fullName evidence="1">Glucose-inhibited division protein A</fullName>
    </alternativeName>
</protein>
<keyword id="KW-0963">Cytoplasm</keyword>
<keyword id="KW-0274">FAD</keyword>
<keyword id="KW-0285">Flavoprotein</keyword>
<keyword id="KW-0520">NAD</keyword>
<keyword id="KW-0819">tRNA processing</keyword>
<organism>
    <name type="scientific">Rickettsia typhi (strain ATCC VR-144 / Wilmington)</name>
    <dbReference type="NCBI Taxonomy" id="257363"/>
    <lineage>
        <taxon>Bacteria</taxon>
        <taxon>Pseudomonadati</taxon>
        <taxon>Pseudomonadota</taxon>
        <taxon>Alphaproteobacteria</taxon>
        <taxon>Rickettsiales</taxon>
        <taxon>Rickettsiaceae</taxon>
        <taxon>Rickettsieae</taxon>
        <taxon>Rickettsia</taxon>
        <taxon>typhus group</taxon>
    </lineage>
</organism>